<evidence type="ECO:0000250" key="1">
    <source>
        <dbReference type="UniProtKB" id="Q96L58"/>
    </source>
</evidence>
<evidence type="ECO:0000255" key="2"/>
<evidence type="ECO:0000303" key="3">
    <source>
    </source>
</evidence>
<evidence type="ECO:0000305" key="4"/>
<evidence type="ECO:0000305" key="5">
    <source>
    </source>
</evidence>
<organism>
    <name type="scientific">Mus musculus</name>
    <name type="common">Mouse</name>
    <dbReference type="NCBI Taxonomy" id="10090"/>
    <lineage>
        <taxon>Eukaryota</taxon>
        <taxon>Metazoa</taxon>
        <taxon>Chordata</taxon>
        <taxon>Craniata</taxon>
        <taxon>Vertebrata</taxon>
        <taxon>Euteleostomi</taxon>
        <taxon>Mammalia</taxon>
        <taxon>Eutheria</taxon>
        <taxon>Euarchontoglires</taxon>
        <taxon>Glires</taxon>
        <taxon>Rodentia</taxon>
        <taxon>Myomorpha</taxon>
        <taxon>Muroidea</taxon>
        <taxon>Muridae</taxon>
        <taxon>Murinae</taxon>
        <taxon>Mus</taxon>
        <taxon>Mus</taxon>
    </lineage>
</organism>
<name>B3GT6_MOUSE</name>
<sequence>MKVFRRAWRHRVALGLGGLAFCGTTLLYLARCASEGETPSASGAARPRAKAFLAVLVASAPRAVERRTAVRSTWLAPERRGGPEDVWARFAVGTGGLGSEERRALELEQAQHGDLLLLPALRDAYENLTAKVLAMLTWLDERVDFEFVLKADDDSFARLDAILVDLRAREPARRRRLYWGFFSGRGRVKPGGRWREAAWQLCDYYLPYALGGGYVLSADLVHYLRLSREYLRAWHSEDVSLGTWLAPVDVQREHDPRFDTEYKSRGCNNQYLVTHKQSPEDMLEKQQMLLHEGRLCKHEVQLRLSYVYDWSAPPSQCCQRKEGVP</sequence>
<keyword id="KW-0325">Glycoprotein</keyword>
<keyword id="KW-0328">Glycosyltransferase</keyword>
<keyword id="KW-0333">Golgi apparatus</keyword>
<keyword id="KW-0464">Manganese</keyword>
<keyword id="KW-0472">Membrane</keyword>
<keyword id="KW-1185">Reference proteome</keyword>
<keyword id="KW-0735">Signal-anchor</keyword>
<keyword id="KW-0808">Transferase</keyword>
<keyword id="KW-0812">Transmembrane</keyword>
<keyword id="KW-1133">Transmembrane helix</keyword>
<feature type="chain" id="PRO_0000219169" description="Beta-1,3-galactosyltransferase 6">
    <location>
        <begin position="1"/>
        <end position="325"/>
    </location>
</feature>
<feature type="topological domain" description="Cytoplasmic" evidence="2">
    <location>
        <begin position="1"/>
        <end position="11"/>
    </location>
</feature>
<feature type="transmembrane region" description="Helical; Signal-anchor for type II membrane protein" evidence="2">
    <location>
        <begin position="12"/>
        <end position="30"/>
    </location>
</feature>
<feature type="topological domain" description="Lumenal" evidence="2">
    <location>
        <begin position="31"/>
        <end position="325"/>
    </location>
</feature>
<feature type="glycosylation site" description="N-linked (GlcNAc...) asparagine" evidence="2">
    <location>
        <position position="127"/>
    </location>
</feature>
<reference key="1">
    <citation type="journal article" date="2001" name="J. Biol. Chem.">
        <title>Biosynthesis of the linkage region of glycosaminoglycans: cloning and activity of galactosyltransferase II, the sixth member of the beta 1,3-galactosyltransferase family (beta 3GalT6).</title>
        <authorList>
            <person name="Bai X."/>
            <person name="Zhou D."/>
            <person name="Brown J.R."/>
            <person name="Crawford B.E."/>
            <person name="Hennet T."/>
            <person name="Esko J.D."/>
        </authorList>
    </citation>
    <scope>NUCLEOTIDE SEQUENCE [MRNA]</scope>
    <source>
        <strain>BALB/cJ</strain>
    </source>
</reference>
<reference key="2">
    <citation type="journal article" date="2005" name="Science">
        <title>The transcriptional landscape of the mammalian genome.</title>
        <authorList>
            <person name="Carninci P."/>
            <person name="Kasukawa T."/>
            <person name="Katayama S."/>
            <person name="Gough J."/>
            <person name="Frith M.C."/>
            <person name="Maeda N."/>
            <person name="Oyama R."/>
            <person name="Ravasi T."/>
            <person name="Lenhard B."/>
            <person name="Wells C."/>
            <person name="Kodzius R."/>
            <person name="Shimokawa K."/>
            <person name="Bajic V.B."/>
            <person name="Brenner S.E."/>
            <person name="Batalov S."/>
            <person name="Forrest A.R."/>
            <person name="Zavolan M."/>
            <person name="Davis M.J."/>
            <person name="Wilming L.G."/>
            <person name="Aidinis V."/>
            <person name="Allen J.E."/>
            <person name="Ambesi-Impiombato A."/>
            <person name="Apweiler R."/>
            <person name="Aturaliya R.N."/>
            <person name="Bailey T.L."/>
            <person name="Bansal M."/>
            <person name="Baxter L."/>
            <person name="Beisel K.W."/>
            <person name="Bersano T."/>
            <person name="Bono H."/>
            <person name="Chalk A.M."/>
            <person name="Chiu K.P."/>
            <person name="Choudhary V."/>
            <person name="Christoffels A."/>
            <person name="Clutterbuck D.R."/>
            <person name="Crowe M.L."/>
            <person name="Dalla E."/>
            <person name="Dalrymple B.P."/>
            <person name="de Bono B."/>
            <person name="Della Gatta G."/>
            <person name="di Bernardo D."/>
            <person name="Down T."/>
            <person name="Engstrom P."/>
            <person name="Fagiolini M."/>
            <person name="Faulkner G."/>
            <person name="Fletcher C.F."/>
            <person name="Fukushima T."/>
            <person name="Furuno M."/>
            <person name="Futaki S."/>
            <person name="Gariboldi M."/>
            <person name="Georgii-Hemming P."/>
            <person name="Gingeras T.R."/>
            <person name="Gojobori T."/>
            <person name="Green R.E."/>
            <person name="Gustincich S."/>
            <person name="Harbers M."/>
            <person name="Hayashi Y."/>
            <person name="Hensch T.K."/>
            <person name="Hirokawa N."/>
            <person name="Hill D."/>
            <person name="Huminiecki L."/>
            <person name="Iacono M."/>
            <person name="Ikeo K."/>
            <person name="Iwama A."/>
            <person name="Ishikawa T."/>
            <person name="Jakt M."/>
            <person name="Kanapin A."/>
            <person name="Katoh M."/>
            <person name="Kawasawa Y."/>
            <person name="Kelso J."/>
            <person name="Kitamura H."/>
            <person name="Kitano H."/>
            <person name="Kollias G."/>
            <person name="Krishnan S.P."/>
            <person name="Kruger A."/>
            <person name="Kummerfeld S.K."/>
            <person name="Kurochkin I.V."/>
            <person name="Lareau L.F."/>
            <person name="Lazarevic D."/>
            <person name="Lipovich L."/>
            <person name="Liu J."/>
            <person name="Liuni S."/>
            <person name="McWilliam S."/>
            <person name="Madan Babu M."/>
            <person name="Madera M."/>
            <person name="Marchionni L."/>
            <person name="Matsuda H."/>
            <person name="Matsuzawa S."/>
            <person name="Miki H."/>
            <person name="Mignone F."/>
            <person name="Miyake S."/>
            <person name="Morris K."/>
            <person name="Mottagui-Tabar S."/>
            <person name="Mulder N."/>
            <person name="Nakano N."/>
            <person name="Nakauchi H."/>
            <person name="Ng P."/>
            <person name="Nilsson R."/>
            <person name="Nishiguchi S."/>
            <person name="Nishikawa S."/>
            <person name="Nori F."/>
            <person name="Ohara O."/>
            <person name="Okazaki Y."/>
            <person name="Orlando V."/>
            <person name="Pang K.C."/>
            <person name="Pavan W.J."/>
            <person name="Pavesi G."/>
            <person name="Pesole G."/>
            <person name="Petrovsky N."/>
            <person name="Piazza S."/>
            <person name="Reed J."/>
            <person name="Reid J.F."/>
            <person name="Ring B.Z."/>
            <person name="Ringwald M."/>
            <person name="Rost B."/>
            <person name="Ruan Y."/>
            <person name="Salzberg S.L."/>
            <person name="Sandelin A."/>
            <person name="Schneider C."/>
            <person name="Schoenbach C."/>
            <person name="Sekiguchi K."/>
            <person name="Semple C.A."/>
            <person name="Seno S."/>
            <person name="Sessa L."/>
            <person name="Sheng Y."/>
            <person name="Shibata Y."/>
            <person name="Shimada H."/>
            <person name="Shimada K."/>
            <person name="Silva D."/>
            <person name="Sinclair B."/>
            <person name="Sperling S."/>
            <person name="Stupka E."/>
            <person name="Sugiura K."/>
            <person name="Sultana R."/>
            <person name="Takenaka Y."/>
            <person name="Taki K."/>
            <person name="Tammoja K."/>
            <person name="Tan S.L."/>
            <person name="Tang S."/>
            <person name="Taylor M.S."/>
            <person name="Tegner J."/>
            <person name="Teichmann S.A."/>
            <person name="Ueda H.R."/>
            <person name="van Nimwegen E."/>
            <person name="Verardo R."/>
            <person name="Wei C.L."/>
            <person name="Yagi K."/>
            <person name="Yamanishi H."/>
            <person name="Zabarovsky E."/>
            <person name="Zhu S."/>
            <person name="Zimmer A."/>
            <person name="Hide W."/>
            <person name="Bult C."/>
            <person name="Grimmond S.M."/>
            <person name="Teasdale R.D."/>
            <person name="Liu E.T."/>
            <person name="Brusic V."/>
            <person name="Quackenbush J."/>
            <person name="Wahlestedt C."/>
            <person name="Mattick J.S."/>
            <person name="Hume D.A."/>
            <person name="Kai C."/>
            <person name="Sasaki D."/>
            <person name="Tomaru Y."/>
            <person name="Fukuda S."/>
            <person name="Kanamori-Katayama M."/>
            <person name="Suzuki M."/>
            <person name="Aoki J."/>
            <person name="Arakawa T."/>
            <person name="Iida J."/>
            <person name="Imamura K."/>
            <person name="Itoh M."/>
            <person name="Kato T."/>
            <person name="Kawaji H."/>
            <person name="Kawagashira N."/>
            <person name="Kawashima T."/>
            <person name="Kojima M."/>
            <person name="Kondo S."/>
            <person name="Konno H."/>
            <person name="Nakano K."/>
            <person name="Ninomiya N."/>
            <person name="Nishio T."/>
            <person name="Okada M."/>
            <person name="Plessy C."/>
            <person name="Shibata K."/>
            <person name="Shiraki T."/>
            <person name="Suzuki S."/>
            <person name="Tagami M."/>
            <person name="Waki K."/>
            <person name="Watahiki A."/>
            <person name="Okamura-Oho Y."/>
            <person name="Suzuki H."/>
            <person name="Kawai J."/>
            <person name="Hayashizaki Y."/>
        </authorList>
    </citation>
    <scope>NUCLEOTIDE SEQUENCE [LARGE SCALE MRNA]</scope>
    <source>
        <strain>C57BL/6J</strain>
        <tissue>Cecum</tissue>
    </source>
</reference>
<reference key="3">
    <citation type="journal article" date="2004" name="Genome Res.">
        <title>The status, quality, and expansion of the NIH full-length cDNA project: the Mammalian Gene Collection (MGC).</title>
        <authorList>
            <consortium name="The MGC Project Team"/>
        </authorList>
    </citation>
    <scope>NUCLEOTIDE SEQUENCE [LARGE SCALE MRNA]</scope>
    <source>
        <strain>FVB/N-3</strain>
        <tissue>Mammary tumor</tissue>
    </source>
</reference>
<dbReference type="EC" id="2.4.1.134" evidence="1"/>
<dbReference type="EMBL" id="AY050569">
    <property type="protein sequence ID" value="AAL11441.1"/>
    <property type="molecule type" value="mRNA"/>
</dbReference>
<dbReference type="EMBL" id="AK033608">
    <property type="protein sequence ID" value="BAC28387.1"/>
    <property type="molecule type" value="mRNA"/>
</dbReference>
<dbReference type="EMBL" id="AK078083">
    <property type="protein sequence ID" value="BAC37119.1"/>
    <property type="molecule type" value="mRNA"/>
</dbReference>
<dbReference type="EMBL" id="AK090344">
    <property type="protein sequence ID" value="BAC41178.1"/>
    <property type="molecule type" value="mRNA"/>
</dbReference>
<dbReference type="EMBL" id="BC082998">
    <property type="protein sequence ID" value="AAH82998.1"/>
    <property type="molecule type" value="mRNA"/>
</dbReference>
<dbReference type="CCDS" id="CCDS19053.1"/>
<dbReference type="RefSeq" id="NP_536693.1">
    <property type="nucleotide sequence ID" value="NM_080445.4"/>
</dbReference>
<dbReference type="SMR" id="Q91Z92"/>
<dbReference type="BioGRID" id="228237">
    <property type="interactions" value="1"/>
</dbReference>
<dbReference type="FunCoup" id="Q91Z92">
    <property type="interactions" value="1146"/>
</dbReference>
<dbReference type="STRING" id="10090.ENSMUSP00000057521"/>
<dbReference type="CAZy" id="GT31">
    <property type="family name" value="Glycosyltransferase Family 31"/>
</dbReference>
<dbReference type="GlyCosmos" id="Q91Z92">
    <property type="glycosylation" value="1 site, No reported glycans"/>
</dbReference>
<dbReference type="GlyGen" id="Q91Z92">
    <property type="glycosylation" value="1 site, 1 N-linked glycan (1 site)"/>
</dbReference>
<dbReference type="PhosphoSitePlus" id="Q91Z92"/>
<dbReference type="PaxDb" id="10090-ENSMUSP00000057521"/>
<dbReference type="PeptideAtlas" id="Q91Z92"/>
<dbReference type="ProteomicsDB" id="277098"/>
<dbReference type="Pumba" id="Q91Z92"/>
<dbReference type="Antibodypedia" id="26175">
    <property type="antibodies" value="164 antibodies from 26 providers"/>
</dbReference>
<dbReference type="DNASU" id="117592"/>
<dbReference type="Ensembl" id="ENSMUST00000052185.5">
    <property type="protein sequence ID" value="ENSMUSP00000057521.4"/>
    <property type="gene ID" value="ENSMUSG00000050796.5"/>
</dbReference>
<dbReference type="GeneID" id="117592"/>
<dbReference type="KEGG" id="mmu:117592"/>
<dbReference type="UCSC" id="uc008wfq.1">
    <property type="organism name" value="mouse"/>
</dbReference>
<dbReference type="AGR" id="MGI:2152819"/>
<dbReference type="CTD" id="126792"/>
<dbReference type="MGI" id="MGI:2152819">
    <property type="gene designation" value="B3galt6"/>
</dbReference>
<dbReference type="VEuPathDB" id="HostDB:ENSMUSG00000050796"/>
<dbReference type="eggNOG" id="KOG2288">
    <property type="taxonomic scope" value="Eukaryota"/>
</dbReference>
<dbReference type="GeneTree" id="ENSGT00940000162229"/>
<dbReference type="HOGENOM" id="CLU_046589_0_0_1"/>
<dbReference type="InParanoid" id="Q91Z92"/>
<dbReference type="OMA" id="HVYRWHD"/>
<dbReference type="OrthoDB" id="1158011at2759"/>
<dbReference type="PhylomeDB" id="Q91Z92"/>
<dbReference type="TreeFam" id="TF314311"/>
<dbReference type="Reactome" id="R-MMU-1971475">
    <property type="pathway name" value="A tetrasaccharide linker sequence is required for GAG synthesis"/>
</dbReference>
<dbReference type="UniPathway" id="UPA00755"/>
<dbReference type="UniPathway" id="UPA00756"/>
<dbReference type="BioGRID-ORCS" id="117592">
    <property type="hits" value="5 hits in 80 CRISPR screens"/>
</dbReference>
<dbReference type="CD-CODE" id="CE726F99">
    <property type="entry name" value="Postsynaptic density"/>
</dbReference>
<dbReference type="ChiTaRS" id="B3gnt2">
    <property type="organism name" value="mouse"/>
</dbReference>
<dbReference type="PRO" id="PR:Q91Z92"/>
<dbReference type="Proteomes" id="UP000000589">
    <property type="component" value="Chromosome 4"/>
</dbReference>
<dbReference type="RNAct" id="Q91Z92">
    <property type="molecule type" value="protein"/>
</dbReference>
<dbReference type="Bgee" id="ENSMUSG00000050796">
    <property type="expression patterns" value="Expressed in optic fissure and 204 other cell types or tissues"/>
</dbReference>
<dbReference type="GO" id="GO:0005794">
    <property type="term" value="C:Golgi apparatus"/>
    <property type="evidence" value="ECO:0000314"/>
    <property type="project" value="MGI"/>
</dbReference>
<dbReference type="GO" id="GO:0032580">
    <property type="term" value="C:Golgi cisterna membrane"/>
    <property type="evidence" value="ECO:0007669"/>
    <property type="project" value="UniProtKB-SubCell"/>
</dbReference>
<dbReference type="GO" id="GO:0005797">
    <property type="term" value="C:Golgi medial cisterna"/>
    <property type="evidence" value="ECO:0000314"/>
    <property type="project" value="MGI"/>
</dbReference>
<dbReference type="GO" id="GO:0047220">
    <property type="term" value="F:galactosylxylosylprotein 3-beta-galactosyltransferase activity"/>
    <property type="evidence" value="ECO:0000314"/>
    <property type="project" value="MGI"/>
</dbReference>
<dbReference type="GO" id="GO:0050650">
    <property type="term" value="P:chondroitin sulfate proteoglycan biosynthetic process"/>
    <property type="evidence" value="ECO:0007669"/>
    <property type="project" value="Ensembl"/>
</dbReference>
<dbReference type="GO" id="GO:0050651">
    <property type="term" value="P:dermatan sulfate proteoglycan biosynthetic process"/>
    <property type="evidence" value="ECO:0007669"/>
    <property type="project" value="Ensembl"/>
</dbReference>
<dbReference type="GO" id="GO:0006024">
    <property type="term" value="P:glycosaminoglycan biosynthetic process"/>
    <property type="evidence" value="ECO:0000314"/>
    <property type="project" value="MGI"/>
</dbReference>
<dbReference type="GO" id="GO:0015012">
    <property type="term" value="P:heparan sulfate proteoglycan biosynthetic process"/>
    <property type="evidence" value="ECO:0007669"/>
    <property type="project" value="UniProtKB-UniPathway"/>
</dbReference>
<dbReference type="GO" id="GO:0006486">
    <property type="term" value="P:protein glycosylation"/>
    <property type="evidence" value="ECO:0007669"/>
    <property type="project" value="InterPro"/>
</dbReference>
<dbReference type="GO" id="GO:0030166">
    <property type="term" value="P:proteoglycan biosynthetic process"/>
    <property type="evidence" value="ECO:0000250"/>
    <property type="project" value="UniProtKB"/>
</dbReference>
<dbReference type="FunFam" id="3.90.550.50:FF:000018">
    <property type="entry name" value="Hexosyltransferase"/>
    <property type="match status" value="1"/>
</dbReference>
<dbReference type="Gene3D" id="3.90.550.50">
    <property type="match status" value="1"/>
</dbReference>
<dbReference type="InterPro" id="IPR002659">
    <property type="entry name" value="Glyco_trans_31"/>
</dbReference>
<dbReference type="PANTHER" id="PTHR11214:SF3">
    <property type="entry name" value="BETA-1,3-GALACTOSYLTRANSFERASE 6"/>
    <property type="match status" value="1"/>
</dbReference>
<dbReference type="PANTHER" id="PTHR11214">
    <property type="entry name" value="BETA-1,3-N-ACETYLGLUCOSAMINYLTRANSFERASE"/>
    <property type="match status" value="1"/>
</dbReference>
<dbReference type="Pfam" id="PF01762">
    <property type="entry name" value="Galactosyl_T"/>
    <property type="match status" value="1"/>
</dbReference>
<proteinExistence type="evidence at transcript level"/>
<comment type="function">
    <text evidence="1">Beta-1,3-galactosyltransferase that transfers galactose from UDP-galactose to substrates with a terminal beta-linked galactose residue. Has a preference for galactose-beta-1,4-xylose that is found in the linker region of glycosaminoglycans, such as heparan sulfate and chondroitin sulfate. Has no activity towards substrates with terminal glucosamine or galactosamine residues.</text>
</comment>
<comment type="catalytic activity">
    <reaction evidence="1">
        <text>3-O-(beta-D-galactosyl-(1-&gt;4)-beta-D-xylosyl)-L-seryl-[protein] + UDP-alpha-D-galactose = 3-O-(beta-D-galactosyl-(1-&gt;3)-beta-D-galactosyl-(1-&gt;4)-beta-D-xylosyl)-L-seryl-[protein] + UDP + H(+)</text>
        <dbReference type="Rhea" id="RHEA:11780"/>
        <dbReference type="Rhea" id="RHEA-COMP:12570"/>
        <dbReference type="Rhea" id="RHEA-COMP:12571"/>
        <dbReference type="ChEBI" id="CHEBI:15378"/>
        <dbReference type="ChEBI" id="CHEBI:58223"/>
        <dbReference type="ChEBI" id="CHEBI:66914"/>
        <dbReference type="ChEBI" id="CHEBI:132088"/>
        <dbReference type="ChEBI" id="CHEBI:132090"/>
        <dbReference type="EC" id="2.4.1.134"/>
    </reaction>
    <physiologicalReaction direction="left-to-right" evidence="1">
        <dbReference type="Rhea" id="RHEA:11781"/>
    </physiologicalReaction>
</comment>
<comment type="cofactor">
    <cofactor evidence="1">
        <name>Mn(2+)</name>
        <dbReference type="ChEBI" id="CHEBI:29035"/>
    </cofactor>
</comment>
<comment type="pathway">
    <text evidence="1">Glycan metabolism; chondroitin sulfate biosynthesis.</text>
</comment>
<comment type="pathway">
    <text evidence="1">Glycan metabolism; heparan sulfate biosynthesis.</text>
</comment>
<comment type="subcellular location">
    <subcellularLocation>
        <location evidence="1">Golgi apparatus</location>
        <location evidence="1">Golgi stack membrane</location>
        <topology evidence="1">Single-pass type II membrane protein</topology>
    </subcellularLocation>
</comment>
<comment type="similarity">
    <text evidence="4">Belongs to the glycosyltransferase 31 family.</text>
</comment>
<comment type="online information" name="Functional Glycomics Gateway - GTase">
    <link uri="http://www.functionalglycomics.org/glycomics/molecule/jsp/glycoEnzyme/viewGlycoEnzyme.jsp?gbpId=gt_mou_459"/>
    <text>b3GalT6</text>
</comment>
<protein>
    <recommendedName>
        <fullName evidence="5">Beta-1,3-galactosyltransferase 6</fullName>
        <shortName>Beta-1,3-GalTase 6</shortName>
        <shortName>Beta3Gal-T6</shortName>
        <shortName evidence="3">Beta3GalT6</shortName>
        <ecNumber evidence="1">2.4.1.134</ecNumber>
    </recommendedName>
    <alternativeName>
        <fullName>GAG GalTII</fullName>
    </alternativeName>
    <alternativeName>
        <fullName>Galactosyltransferase II</fullName>
    </alternativeName>
    <alternativeName>
        <fullName>Galactosylxylosylprotein 3-beta-galactosyltransferase</fullName>
    </alternativeName>
    <alternativeName>
        <fullName>UDP-Gal:betaGal beta 1,3-galactosyltransferase polypeptide 6</fullName>
    </alternativeName>
</protein>
<gene>
    <name type="primary">B3galt6</name>
</gene>
<accession>Q91Z92</accession>
<accession>Q8CC93</accession>